<dbReference type="EC" id="1.7.1.13" evidence="1"/>
<dbReference type="EMBL" id="CP001215">
    <property type="protein sequence ID" value="ACP13984.1"/>
    <property type="molecule type" value="Genomic_DNA"/>
</dbReference>
<dbReference type="RefSeq" id="WP_000918895.1">
    <property type="nucleotide sequence ID" value="NC_012581.1"/>
</dbReference>
<dbReference type="SMR" id="C3LAK7"/>
<dbReference type="GeneID" id="93009696"/>
<dbReference type="KEGG" id="bah:BAMEG_3233"/>
<dbReference type="HOGENOM" id="CLU_102489_0_1_9"/>
<dbReference type="UniPathway" id="UPA00392"/>
<dbReference type="GO" id="GO:0005737">
    <property type="term" value="C:cytoplasm"/>
    <property type="evidence" value="ECO:0007669"/>
    <property type="project" value="UniProtKB-SubCell"/>
</dbReference>
<dbReference type="GO" id="GO:0033739">
    <property type="term" value="F:preQ1 synthase activity"/>
    <property type="evidence" value="ECO:0007669"/>
    <property type="project" value="UniProtKB-UniRule"/>
</dbReference>
<dbReference type="GO" id="GO:0008616">
    <property type="term" value="P:queuosine biosynthetic process"/>
    <property type="evidence" value="ECO:0007669"/>
    <property type="project" value="UniProtKB-UniRule"/>
</dbReference>
<dbReference type="GO" id="GO:0006400">
    <property type="term" value="P:tRNA modification"/>
    <property type="evidence" value="ECO:0007669"/>
    <property type="project" value="UniProtKB-UniRule"/>
</dbReference>
<dbReference type="Gene3D" id="3.30.1130.10">
    <property type="match status" value="1"/>
</dbReference>
<dbReference type="HAMAP" id="MF_00818">
    <property type="entry name" value="QueF_type1"/>
    <property type="match status" value="1"/>
</dbReference>
<dbReference type="InterPro" id="IPR043133">
    <property type="entry name" value="GTP-CH-I_C/QueF"/>
</dbReference>
<dbReference type="InterPro" id="IPR050084">
    <property type="entry name" value="NADPH_dep_7-cyano-7-deazaG_red"/>
</dbReference>
<dbReference type="InterPro" id="IPR029500">
    <property type="entry name" value="QueF"/>
</dbReference>
<dbReference type="InterPro" id="IPR016856">
    <property type="entry name" value="QueF_type1"/>
</dbReference>
<dbReference type="NCBIfam" id="TIGR03139">
    <property type="entry name" value="QueF-II"/>
    <property type="match status" value="1"/>
</dbReference>
<dbReference type="PANTHER" id="PTHR34354">
    <property type="entry name" value="NADPH-DEPENDENT 7-CYANO-7-DEAZAGUANINE REDUCTASE"/>
    <property type="match status" value="1"/>
</dbReference>
<dbReference type="PANTHER" id="PTHR34354:SF1">
    <property type="entry name" value="NADPH-DEPENDENT 7-CYANO-7-DEAZAGUANINE REDUCTASE"/>
    <property type="match status" value="1"/>
</dbReference>
<dbReference type="Pfam" id="PF14489">
    <property type="entry name" value="QueF"/>
    <property type="match status" value="1"/>
</dbReference>
<dbReference type="PIRSF" id="PIRSF027377">
    <property type="entry name" value="Nitrile_oxidored_QueF"/>
    <property type="match status" value="1"/>
</dbReference>
<dbReference type="SUPFAM" id="SSF55620">
    <property type="entry name" value="Tetrahydrobiopterin biosynthesis enzymes-like"/>
    <property type="match status" value="1"/>
</dbReference>
<protein>
    <recommendedName>
        <fullName evidence="1">NADPH-dependent 7-cyano-7-deazaguanine reductase</fullName>
        <ecNumber evidence="1">1.7.1.13</ecNumber>
    </recommendedName>
    <alternativeName>
        <fullName evidence="1">7-cyano-7-carbaguanine reductase</fullName>
    </alternativeName>
    <alternativeName>
        <fullName evidence="1">NADPH-dependent nitrile oxidoreductase</fullName>
    </alternativeName>
    <alternativeName>
        <fullName evidence="1">PreQ(0) reductase</fullName>
    </alternativeName>
</protein>
<comment type="function">
    <text evidence="1">Catalyzes the NADPH-dependent reduction of 7-cyano-7-deazaguanine (preQ0) to 7-aminomethyl-7-deazaguanine (preQ1).</text>
</comment>
<comment type="catalytic activity">
    <reaction evidence="1">
        <text>7-aminomethyl-7-carbaguanine + 2 NADP(+) = 7-cyano-7-deazaguanine + 2 NADPH + 3 H(+)</text>
        <dbReference type="Rhea" id="RHEA:13409"/>
        <dbReference type="ChEBI" id="CHEBI:15378"/>
        <dbReference type="ChEBI" id="CHEBI:45075"/>
        <dbReference type="ChEBI" id="CHEBI:57783"/>
        <dbReference type="ChEBI" id="CHEBI:58349"/>
        <dbReference type="ChEBI" id="CHEBI:58703"/>
        <dbReference type="EC" id="1.7.1.13"/>
    </reaction>
</comment>
<comment type="pathway">
    <text evidence="1">tRNA modification; tRNA-queuosine biosynthesis.</text>
</comment>
<comment type="subcellular location">
    <subcellularLocation>
        <location evidence="1">Cytoplasm</location>
    </subcellularLocation>
</comment>
<comment type="similarity">
    <text evidence="1">Belongs to the GTP cyclohydrolase I family. QueF type 1 subfamily.</text>
</comment>
<feature type="chain" id="PRO_1000148665" description="NADPH-dependent 7-cyano-7-deazaguanine reductase">
    <location>
        <begin position="1"/>
        <end position="165"/>
    </location>
</feature>
<feature type="active site" description="Thioimide intermediate" evidence="1">
    <location>
        <position position="56"/>
    </location>
</feature>
<feature type="active site" description="Proton donor" evidence="1">
    <location>
        <position position="63"/>
    </location>
</feature>
<feature type="binding site" evidence="1">
    <location>
        <begin position="78"/>
        <end position="80"/>
    </location>
    <ligand>
        <name>substrate</name>
    </ligand>
</feature>
<feature type="binding site" evidence="1">
    <location>
        <begin position="97"/>
        <end position="98"/>
    </location>
    <ligand>
        <name>substrate</name>
    </ligand>
</feature>
<gene>
    <name evidence="1" type="primary">queF</name>
    <name type="ordered locus">BAMEG_3233</name>
</gene>
<keyword id="KW-0963">Cytoplasm</keyword>
<keyword id="KW-0521">NADP</keyword>
<keyword id="KW-0560">Oxidoreductase</keyword>
<keyword id="KW-0671">Queuosine biosynthesis</keyword>
<name>QUEF_BACAC</name>
<proteinExistence type="inferred from homology"/>
<organism>
    <name type="scientific">Bacillus anthracis (strain CDC 684 / NRRL 3495)</name>
    <dbReference type="NCBI Taxonomy" id="568206"/>
    <lineage>
        <taxon>Bacteria</taxon>
        <taxon>Bacillati</taxon>
        <taxon>Bacillota</taxon>
        <taxon>Bacilli</taxon>
        <taxon>Bacillales</taxon>
        <taxon>Bacillaceae</taxon>
        <taxon>Bacillus</taxon>
        <taxon>Bacillus cereus group</taxon>
    </lineage>
</organism>
<accession>C3LAK7</accession>
<reference key="1">
    <citation type="submission" date="2008-10" db="EMBL/GenBank/DDBJ databases">
        <title>Genome sequence of Bacillus anthracis str. CDC 684.</title>
        <authorList>
            <person name="Dodson R.J."/>
            <person name="Munk A.C."/>
            <person name="Brettin T."/>
            <person name="Bruce D."/>
            <person name="Detter C."/>
            <person name="Tapia R."/>
            <person name="Han C."/>
            <person name="Sutton G."/>
            <person name="Sims D."/>
        </authorList>
    </citation>
    <scope>NUCLEOTIDE SEQUENCE [LARGE SCALE GENOMIC DNA]</scope>
    <source>
        <strain>CDC 684 / NRRL 3495</strain>
    </source>
</reference>
<evidence type="ECO:0000255" key="1">
    <source>
        <dbReference type="HAMAP-Rule" id="MF_00818"/>
    </source>
</evidence>
<sequence>MAGRLDEDLKDVTLLGNQNTKYLFEYSPEILEVFDNNHPNRDYFVKFNCPEFTSLCPKTGQPDFATIYISYIPEQRMVESKSLKLYLFSFRNHGDFHEDCMNVIMNDLIKLMDPRYIEVWGKFTPRGGISIDPYCNYGRPGTKYEQMADYRMMNHDLYPETIDNR</sequence>